<keyword id="KW-0963">Cytoplasm</keyword>
<keyword id="KW-0269">Exonuclease</keyword>
<keyword id="KW-0378">Hydrolase</keyword>
<keyword id="KW-0540">Nuclease</keyword>
<keyword id="KW-1185">Reference proteome</keyword>
<protein>
    <recommendedName>
        <fullName evidence="2">Exodeoxyribonuclease 7 small subunit</fullName>
        <ecNumber evidence="2">3.1.11.6</ecNumber>
    </recommendedName>
    <alternativeName>
        <fullName evidence="2">Exodeoxyribonuclease VII small subunit</fullName>
        <shortName evidence="2">Exonuclease VII small subunit</shortName>
    </alternativeName>
</protein>
<proteinExistence type="inferred from homology"/>
<feature type="initiator methionine" description="Removed" evidence="1">
    <location>
        <position position="1"/>
    </location>
</feature>
<feature type="chain" id="PRO_0000207001" description="Exodeoxyribonuclease 7 small subunit">
    <location>
        <begin position="2"/>
        <end position="80"/>
    </location>
</feature>
<name>EX7S_SHIFL</name>
<organism>
    <name type="scientific">Shigella flexneri</name>
    <dbReference type="NCBI Taxonomy" id="623"/>
    <lineage>
        <taxon>Bacteria</taxon>
        <taxon>Pseudomonadati</taxon>
        <taxon>Pseudomonadota</taxon>
        <taxon>Gammaproteobacteria</taxon>
        <taxon>Enterobacterales</taxon>
        <taxon>Enterobacteriaceae</taxon>
        <taxon>Shigella</taxon>
    </lineage>
</organism>
<sequence>MPKKNEAPASFEKALSELEQIVTRLESGDLPLEEALNEFERGVQLARQGQAKLQQAEQRVQILLSDNEDASLTPFTPDNE</sequence>
<evidence type="ECO:0000250" key="1"/>
<evidence type="ECO:0000255" key="2">
    <source>
        <dbReference type="HAMAP-Rule" id="MF_00337"/>
    </source>
</evidence>
<evidence type="ECO:0000305" key="3"/>
<dbReference type="EC" id="3.1.11.6" evidence="2"/>
<dbReference type="EMBL" id="AE005674">
    <property type="protein sequence ID" value="AAN42017.1"/>
    <property type="molecule type" value="Genomic_DNA"/>
</dbReference>
<dbReference type="EMBL" id="AE014073">
    <property type="protein sequence ID" value="AAP15893.1"/>
    <property type="molecule type" value="Genomic_DNA"/>
</dbReference>
<dbReference type="RefSeq" id="NP_706310.1">
    <property type="nucleotide sequence ID" value="NC_004337.2"/>
</dbReference>
<dbReference type="RefSeq" id="WP_001124935.1">
    <property type="nucleotide sequence ID" value="NZ_WPGW01000023.1"/>
</dbReference>
<dbReference type="SMR" id="P0A8H2"/>
<dbReference type="STRING" id="198214.SF0359"/>
<dbReference type="PaxDb" id="198214-SF0359"/>
<dbReference type="GeneID" id="1027660"/>
<dbReference type="GeneID" id="75202844"/>
<dbReference type="KEGG" id="sfl:SF0359"/>
<dbReference type="KEGG" id="sfx:S0367"/>
<dbReference type="PATRIC" id="fig|198214.7.peg.410"/>
<dbReference type="HOGENOM" id="CLU_145918_3_3_6"/>
<dbReference type="Proteomes" id="UP000001006">
    <property type="component" value="Chromosome"/>
</dbReference>
<dbReference type="Proteomes" id="UP000002673">
    <property type="component" value="Chromosome"/>
</dbReference>
<dbReference type="GO" id="GO:0005829">
    <property type="term" value="C:cytosol"/>
    <property type="evidence" value="ECO:0007669"/>
    <property type="project" value="TreeGrafter"/>
</dbReference>
<dbReference type="GO" id="GO:0009318">
    <property type="term" value="C:exodeoxyribonuclease VII complex"/>
    <property type="evidence" value="ECO:0007669"/>
    <property type="project" value="InterPro"/>
</dbReference>
<dbReference type="GO" id="GO:0008855">
    <property type="term" value="F:exodeoxyribonuclease VII activity"/>
    <property type="evidence" value="ECO:0007669"/>
    <property type="project" value="UniProtKB-UniRule"/>
</dbReference>
<dbReference type="GO" id="GO:0006308">
    <property type="term" value="P:DNA catabolic process"/>
    <property type="evidence" value="ECO:0007669"/>
    <property type="project" value="UniProtKB-UniRule"/>
</dbReference>
<dbReference type="FunFam" id="1.10.287.1040:FF:000001">
    <property type="entry name" value="Exodeoxyribonuclease 7 small subunit"/>
    <property type="match status" value="1"/>
</dbReference>
<dbReference type="Gene3D" id="1.10.287.1040">
    <property type="entry name" value="Exonuclease VII, small subunit"/>
    <property type="match status" value="1"/>
</dbReference>
<dbReference type="HAMAP" id="MF_00337">
    <property type="entry name" value="Exonuc_7_S"/>
    <property type="match status" value="1"/>
</dbReference>
<dbReference type="InterPro" id="IPR003761">
    <property type="entry name" value="Exonuc_VII_S"/>
</dbReference>
<dbReference type="InterPro" id="IPR037004">
    <property type="entry name" value="Exonuc_VII_ssu_sf"/>
</dbReference>
<dbReference type="NCBIfam" id="NF002137">
    <property type="entry name" value="PRK00977.1-1"/>
    <property type="match status" value="1"/>
</dbReference>
<dbReference type="NCBIfam" id="NF002140">
    <property type="entry name" value="PRK00977.1-4"/>
    <property type="match status" value="1"/>
</dbReference>
<dbReference type="NCBIfam" id="TIGR01280">
    <property type="entry name" value="xseB"/>
    <property type="match status" value="1"/>
</dbReference>
<dbReference type="PANTHER" id="PTHR34137">
    <property type="entry name" value="EXODEOXYRIBONUCLEASE 7 SMALL SUBUNIT"/>
    <property type="match status" value="1"/>
</dbReference>
<dbReference type="PANTHER" id="PTHR34137:SF1">
    <property type="entry name" value="EXODEOXYRIBONUCLEASE 7 SMALL SUBUNIT"/>
    <property type="match status" value="1"/>
</dbReference>
<dbReference type="Pfam" id="PF02609">
    <property type="entry name" value="Exonuc_VII_S"/>
    <property type="match status" value="1"/>
</dbReference>
<dbReference type="PIRSF" id="PIRSF006488">
    <property type="entry name" value="Exonuc_VII_S"/>
    <property type="match status" value="1"/>
</dbReference>
<dbReference type="SUPFAM" id="SSF116842">
    <property type="entry name" value="XseB-like"/>
    <property type="match status" value="1"/>
</dbReference>
<accession>P0A8H2</accession>
<accession>P22938</accession>
<reference key="1">
    <citation type="journal article" date="2002" name="Nucleic Acids Res.">
        <title>Genome sequence of Shigella flexneri 2a: insights into pathogenicity through comparison with genomes of Escherichia coli K12 and O157.</title>
        <authorList>
            <person name="Jin Q."/>
            <person name="Yuan Z."/>
            <person name="Xu J."/>
            <person name="Wang Y."/>
            <person name="Shen Y."/>
            <person name="Lu W."/>
            <person name="Wang J."/>
            <person name="Liu H."/>
            <person name="Yang J."/>
            <person name="Yang F."/>
            <person name="Zhang X."/>
            <person name="Zhang J."/>
            <person name="Yang G."/>
            <person name="Wu H."/>
            <person name="Qu D."/>
            <person name="Dong J."/>
            <person name="Sun L."/>
            <person name="Xue Y."/>
            <person name="Zhao A."/>
            <person name="Gao Y."/>
            <person name="Zhu J."/>
            <person name="Kan B."/>
            <person name="Ding K."/>
            <person name="Chen S."/>
            <person name="Cheng H."/>
            <person name="Yao Z."/>
            <person name="He B."/>
            <person name="Chen R."/>
            <person name="Ma D."/>
            <person name="Qiang B."/>
            <person name="Wen Y."/>
            <person name="Hou Y."/>
            <person name="Yu J."/>
        </authorList>
    </citation>
    <scope>NUCLEOTIDE SEQUENCE [LARGE SCALE GENOMIC DNA]</scope>
    <source>
        <strain>301 / Serotype 2a</strain>
    </source>
</reference>
<reference key="2">
    <citation type="journal article" date="2003" name="Infect. Immun.">
        <title>Complete genome sequence and comparative genomics of Shigella flexneri serotype 2a strain 2457T.</title>
        <authorList>
            <person name="Wei J."/>
            <person name="Goldberg M.B."/>
            <person name="Burland V."/>
            <person name="Venkatesan M.M."/>
            <person name="Deng W."/>
            <person name="Fournier G."/>
            <person name="Mayhew G.F."/>
            <person name="Plunkett G. III"/>
            <person name="Rose D.J."/>
            <person name="Darling A."/>
            <person name="Mau B."/>
            <person name="Perna N.T."/>
            <person name="Payne S.M."/>
            <person name="Runyen-Janecky L.J."/>
            <person name="Zhou S."/>
            <person name="Schwartz D.C."/>
            <person name="Blattner F.R."/>
        </authorList>
    </citation>
    <scope>NUCLEOTIDE SEQUENCE [LARGE SCALE GENOMIC DNA]</scope>
    <source>
        <strain>ATCC 700930 / 2457T / Serotype 2a</strain>
    </source>
</reference>
<gene>
    <name evidence="2" type="primary">xseB</name>
    <name type="ordered locus">SF0359</name>
    <name type="ordered locus">S0367</name>
</gene>
<comment type="function">
    <text evidence="2">Bidirectionally degrades single-stranded DNA into large acid-insoluble oligonucleotides, which are then degraded further into small acid-soluble oligonucleotides.</text>
</comment>
<comment type="catalytic activity">
    <reaction evidence="2">
        <text>Exonucleolytic cleavage in either 5'- to 3'- or 3'- to 5'-direction to yield nucleoside 5'-phosphates.</text>
        <dbReference type="EC" id="3.1.11.6"/>
    </reaction>
</comment>
<comment type="subunit">
    <text evidence="2">Heterooligomer composed of large and small subunits.</text>
</comment>
<comment type="subcellular location">
    <subcellularLocation>
        <location evidence="2">Cytoplasm</location>
    </subcellularLocation>
</comment>
<comment type="similarity">
    <text evidence="2 3">Belongs to the XseB family.</text>
</comment>